<evidence type="ECO:0000255" key="1">
    <source>
        <dbReference type="HAMAP-Rule" id="MF_01315"/>
    </source>
</evidence>
<evidence type="ECO:0000256" key="2">
    <source>
        <dbReference type="SAM" id="MobiDB-lite"/>
    </source>
</evidence>
<evidence type="ECO:0000305" key="3"/>
<reference key="1">
    <citation type="journal article" date="2006" name="PLoS Biol.">
        <title>The genome of deep-sea vent chemolithoautotroph Thiomicrospira crunogena XCL-2.</title>
        <authorList>
            <person name="Scott K.M."/>
            <person name="Sievert S.M."/>
            <person name="Abril F.N."/>
            <person name="Ball L.A."/>
            <person name="Barrett C.J."/>
            <person name="Blake R.A."/>
            <person name="Boller A.J."/>
            <person name="Chain P.S.G."/>
            <person name="Clark J.A."/>
            <person name="Davis C.R."/>
            <person name="Detter C."/>
            <person name="Do K.F."/>
            <person name="Dobrinski K.P."/>
            <person name="Faza B.I."/>
            <person name="Fitzpatrick K.A."/>
            <person name="Freyermuth S.K."/>
            <person name="Harmer T.L."/>
            <person name="Hauser L.J."/>
            <person name="Huegler M."/>
            <person name="Kerfeld C.A."/>
            <person name="Klotz M.G."/>
            <person name="Kong W.W."/>
            <person name="Land M."/>
            <person name="Lapidus A."/>
            <person name="Larimer F.W."/>
            <person name="Longo D.L."/>
            <person name="Lucas S."/>
            <person name="Malfatti S.A."/>
            <person name="Massey S.E."/>
            <person name="Martin D.D."/>
            <person name="McCuddin Z."/>
            <person name="Meyer F."/>
            <person name="Moore J.L."/>
            <person name="Ocampo L.H. Jr."/>
            <person name="Paul J.H."/>
            <person name="Paulsen I.T."/>
            <person name="Reep D.K."/>
            <person name="Ren Q."/>
            <person name="Ross R.L."/>
            <person name="Sato P.Y."/>
            <person name="Thomas P."/>
            <person name="Tinkham L.E."/>
            <person name="Zeruth G.T."/>
        </authorList>
    </citation>
    <scope>NUCLEOTIDE SEQUENCE [LARGE SCALE GENOMIC DNA]</scope>
    <source>
        <strain>DSM 25203 / XCL-2</strain>
    </source>
</reference>
<comment type="function">
    <text evidence="1">Located at the top of the head of the 30S subunit, it contacts several helices of the 16S rRNA. In the 70S ribosome it contacts the 23S rRNA (bridge B1a) and protein L5 of the 50S subunit (bridge B1b), connecting the 2 subunits; these bridges are implicated in subunit movement. Contacts the tRNAs in the A and P-sites.</text>
</comment>
<comment type="subunit">
    <text evidence="1">Part of the 30S ribosomal subunit. Forms a loose heterodimer with protein S19. Forms two bridges to the 50S subunit in the 70S ribosome.</text>
</comment>
<comment type="similarity">
    <text evidence="1">Belongs to the universal ribosomal protein uS13 family.</text>
</comment>
<feature type="chain" id="PRO_0000230576" description="Small ribosomal subunit protein uS13">
    <location>
        <begin position="1"/>
        <end position="118"/>
    </location>
</feature>
<feature type="region of interest" description="Disordered" evidence="2">
    <location>
        <begin position="91"/>
        <end position="118"/>
    </location>
</feature>
<name>RS13_HYDCU</name>
<protein>
    <recommendedName>
        <fullName evidence="1">Small ribosomal subunit protein uS13</fullName>
    </recommendedName>
    <alternativeName>
        <fullName evidence="3">30S ribosomal protein S13</fullName>
    </alternativeName>
</protein>
<dbReference type="EMBL" id="CP000109">
    <property type="protein sequence ID" value="ABB40912.1"/>
    <property type="molecule type" value="Genomic_DNA"/>
</dbReference>
<dbReference type="SMR" id="Q31IW1"/>
<dbReference type="STRING" id="317025.Tcr_0316"/>
<dbReference type="KEGG" id="tcx:Tcr_0316"/>
<dbReference type="eggNOG" id="COG0099">
    <property type="taxonomic scope" value="Bacteria"/>
</dbReference>
<dbReference type="HOGENOM" id="CLU_103849_1_2_6"/>
<dbReference type="OrthoDB" id="9803610at2"/>
<dbReference type="GO" id="GO:0005829">
    <property type="term" value="C:cytosol"/>
    <property type="evidence" value="ECO:0007669"/>
    <property type="project" value="TreeGrafter"/>
</dbReference>
<dbReference type="GO" id="GO:0015935">
    <property type="term" value="C:small ribosomal subunit"/>
    <property type="evidence" value="ECO:0007669"/>
    <property type="project" value="TreeGrafter"/>
</dbReference>
<dbReference type="GO" id="GO:0019843">
    <property type="term" value="F:rRNA binding"/>
    <property type="evidence" value="ECO:0007669"/>
    <property type="project" value="UniProtKB-UniRule"/>
</dbReference>
<dbReference type="GO" id="GO:0003735">
    <property type="term" value="F:structural constituent of ribosome"/>
    <property type="evidence" value="ECO:0007669"/>
    <property type="project" value="InterPro"/>
</dbReference>
<dbReference type="GO" id="GO:0000049">
    <property type="term" value="F:tRNA binding"/>
    <property type="evidence" value="ECO:0007669"/>
    <property type="project" value="UniProtKB-UniRule"/>
</dbReference>
<dbReference type="GO" id="GO:0006412">
    <property type="term" value="P:translation"/>
    <property type="evidence" value="ECO:0007669"/>
    <property type="project" value="UniProtKB-UniRule"/>
</dbReference>
<dbReference type="FunFam" id="1.10.8.50:FF:000001">
    <property type="entry name" value="30S ribosomal protein S13"/>
    <property type="match status" value="1"/>
</dbReference>
<dbReference type="FunFam" id="4.10.910.10:FF:000001">
    <property type="entry name" value="30S ribosomal protein S13"/>
    <property type="match status" value="1"/>
</dbReference>
<dbReference type="Gene3D" id="1.10.8.50">
    <property type="match status" value="1"/>
</dbReference>
<dbReference type="Gene3D" id="4.10.910.10">
    <property type="entry name" value="30s ribosomal protein s13, domain 2"/>
    <property type="match status" value="1"/>
</dbReference>
<dbReference type="HAMAP" id="MF_01315">
    <property type="entry name" value="Ribosomal_uS13"/>
    <property type="match status" value="1"/>
</dbReference>
<dbReference type="InterPro" id="IPR027437">
    <property type="entry name" value="Rbsml_uS13_C"/>
</dbReference>
<dbReference type="InterPro" id="IPR001892">
    <property type="entry name" value="Ribosomal_uS13"/>
</dbReference>
<dbReference type="InterPro" id="IPR010979">
    <property type="entry name" value="Ribosomal_uS13-like_H2TH"/>
</dbReference>
<dbReference type="InterPro" id="IPR019980">
    <property type="entry name" value="Ribosomal_uS13_bac-type"/>
</dbReference>
<dbReference type="InterPro" id="IPR018269">
    <property type="entry name" value="Ribosomal_uS13_CS"/>
</dbReference>
<dbReference type="NCBIfam" id="TIGR03631">
    <property type="entry name" value="uS13_bact"/>
    <property type="match status" value="1"/>
</dbReference>
<dbReference type="PANTHER" id="PTHR10871">
    <property type="entry name" value="30S RIBOSOMAL PROTEIN S13/40S RIBOSOMAL PROTEIN S18"/>
    <property type="match status" value="1"/>
</dbReference>
<dbReference type="PANTHER" id="PTHR10871:SF1">
    <property type="entry name" value="SMALL RIBOSOMAL SUBUNIT PROTEIN US13M"/>
    <property type="match status" value="1"/>
</dbReference>
<dbReference type="Pfam" id="PF00416">
    <property type="entry name" value="Ribosomal_S13"/>
    <property type="match status" value="1"/>
</dbReference>
<dbReference type="PIRSF" id="PIRSF002134">
    <property type="entry name" value="Ribosomal_S13"/>
    <property type="match status" value="1"/>
</dbReference>
<dbReference type="SUPFAM" id="SSF46946">
    <property type="entry name" value="S13-like H2TH domain"/>
    <property type="match status" value="1"/>
</dbReference>
<dbReference type="PROSITE" id="PS00646">
    <property type="entry name" value="RIBOSOMAL_S13_1"/>
    <property type="match status" value="1"/>
</dbReference>
<dbReference type="PROSITE" id="PS50159">
    <property type="entry name" value="RIBOSOMAL_S13_2"/>
    <property type="match status" value="1"/>
</dbReference>
<accession>Q31IW1</accession>
<sequence>MARIAGVNIPVNKHIVIGLRSIYGVGQTTAQKICADVNIDPTTKVRELTEEQLEALRSEVTKFKIEGDLRRDVTMNIKRLMDMGCYRGIRHRRSLPLRGQRTKNNARTRKGPKKPIKR</sequence>
<proteinExistence type="inferred from homology"/>
<keyword id="KW-0687">Ribonucleoprotein</keyword>
<keyword id="KW-0689">Ribosomal protein</keyword>
<keyword id="KW-0694">RNA-binding</keyword>
<keyword id="KW-0699">rRNA-binding</keyword>
<keyword id="KW-0820">tRNA-binding</keyword>
<gene>
    <name evidence="1" type="primary">rpsM</name>
    <name type="ordered locus">Tcr_0316</name>
</gene>
<organism>
    <name type="scientific">Hydrogenovibrio crunogenus (strain DSM 25203 / XCL-2)</name>
    <name type="common">Thiomicrospira crunogena</name>
    <dbReference type="NCBI Taxonomy" id="317025"/>
    <lineage>
        <taxon>Bacteria</taxon>
        <taxon>Pseudomonadati</taxon>
        <taxon>Pseudomonadota</taxon>
        <taxon>Gammaproteobacteria</taxon>
        <taxon>Thiotrichales</taxon>
        <taxon>Piscirickettsiaceae</taxon>
        <taxon>Hydrogenovibrio</taxon>
    </lineage>
</organism>